<reference key="1">
    <citation type="journal article" date="1980" name="Aust. J. Biol. Sci.">
        <title>Myoglobins of cartilaginous fishes. II. Isolation and amino acid sequence of myoglobin of the shark Mustelus antarcticus.</title>
        <authorList>
            <person name="Fisher W.K."/>
            <person name="Koureas D.D."/>
            <person name="Thompson E.O.P."/>
        </authorList>
    </citation>
    <scope>PROTEIN SEQUENCE OF 2-149</scope>
    <scope>ACETYLATION AT VAL-2</scope>
</reference>
<keyword id="KW-0007">Acetylation</keyword>
<keyword id="KW-0963">Cytoplasm</keyword>
<keyword id="KW-0903">Direct protein sequencing</keyword>
<keyword id="KW-0349">Heme</keyword>
<keyword id="KW-0408">Iron</keyword>
<keyword id="KW-0479">Metal-binding</keyword>
<keyword id="KW-0514">Muscle protein</keyword>
<keyword id="KW-0560">Oxidoreductase</keyword>
<keyword id="KW-0561">Oxygen transport</keyword>
<keyword id="KW-0813">Transport</keyword>
<comment type="function">
    <text evidence="1">Monomeric heme protein which primary function is to store oxygen and facilitate its diffusion within muscle tissues. Reversibly binds oxygen through a pentacoordinated heme iron and enables its timely and efficient release as needed during periods of heightened demand. Depending on the oxidative conditions of tissues and cells, and in addition to its ability to bind oxygen, it also has a nitrite reductase activity whereby it regulates the production of bioactive nitric oxide. Under stress conditions, like hypoxia and anoxia, it also protects cells against reactive oxygen species thanks to its pseudoperoxidase activity.</text>
</comment>
<comment type="catalytic activity">
    <reaction evidence="1">
        <text>Fe(III)-heme b-[protein] + nitric oxide + H2O = Fe(II)-heme b-[protein] + nitrite + 2 H(+)</text>
        <dbReference type="Rhea" id="RHEA:77711"/>
        <dbReference type="Rhea" id="RHEA-COMP:18975"/>
        <dbReference type="Rhea" id="RHEA-COMP:18976"/>
        <dbReference type="ChEBI" id="CHEBI:15377"/>
        <dbReference type="ChEBI" id="CHEBI:15378"/>
        <dbReference type="ChEBI" id="CHEBI:16301"/>
        <dbReference type="ChEBI" id="CHEBI:16480"/>
        <dbReference type="ChEBI" id="CHEBI:55376"/>
        <dbReference type="ChEBI" id="CHEBI:60344"/>
    </reaction>
    <physiologicalReaction direction="right-to-left" evidence="1">
        <dbReference type="Rhea" id="RHEA:77713"/>
    </physiologicalReaction>
</comment>
<comment type="catalytic activity">
    <reaction evidence="1">
        <text>H2O2 + AH2 = A + 2 H2O</text>
        <dbReference type="Rhea" id="RHEA:30275"/>
        <dbReference type="ChEBI" id="CHEBI:13193"/>
        <dbReference type="ChEBI" id="CHEBI:15377"/>
        <dbReference type="ChEBI" id="CHEBI:16240"/>
        <dbReference type="ChEBI" id="CHEBI:17499"/>
    </reaction>
</comment>
<comment type="subunit">
    <text evidence="2">Monomeric.</text>
</comment>
<comment type="subcellular location">
    <subcellularLocation>
        <location evidence="1">Cytoplasm</location>
        <location evidence="1">Sarcoplasm</location>
    </subcellularLocation>
</comment>
<comment type="similarity">
    <text evidence="3">Belongs to the globin family.</text>
</comment>
<organism>
    <name type="scientific">Mustelus antarcticus</name>
    <name type="common">Gummy shark</name>
    <dbReference type="NCBI Taxonomy" id="7813"/>
    <lineage>
        <taxon>Eukaryota</taxon>
        <taxon>Metazoa</taxon>
        <taxon>Chordata</taxon>
        <taxon>Craniata</taxon>
        <taxon>Vertebrata</taxon>
        <taxon>Chondrichthyes</taxon>
        <taxon>Elasmobranchii</taxon>
        <taxon>Galeomorphii</taxon>
        <taxon>Galeoidea</taxon>
        <taxon>Carcharhiniformes</taxon>
        <taxon>Triakidae</taxon>
        <taxon>Mustelus</taxon>
    </lineage>
</organism>
<protein>
    <recommendedName>
        <fullName>Myoglobin</fullName>
    </recommendedName>
    <alternativeName>
        <fullName evidence="1">Nitrite reductase MB</fullName>
        <ecNumber evidence="1">1.7.-.-</ecNumber>
    </alternativeName>
    <alternativeName>
        <fullName evidence="1">Pseudoperoxidase MB</fullName>
        <ecNumber evidence="1">1.11.1.-</ecNumber>
    </alternativeName>
</protein>
<proteinExistence type="evidence at protein level"/>
<dbReference type="EC" id="1.7.-.-" evidence="1"/>
<dbReference type="EC" id="1.11.1.-" evidence="1"/>
<dbReference type="SMR" id="P14399"/>
<dbReference type="iPTMnet" id="P14399"/>
<dbReference type="GO" id="GO:0070062">
    <property type="term" value="C:extracellular exosome"/>
    <property type="evidence" value="ECO:0007669"/>
    <property type="project" value="TreeGrafter"/>
</dbReference>
<dbReference type="GO" id="GO:0016528">
    <property type="term" value="C:sarcoplasm"/>
    <property type="evidence" value="ECO:0000250"/>
    <property type="project" value="UniProtKB"/>
</dbReference>
<dbReference type="GO" id="GO:0020037">
    <property type="term" value="F:heme binding"/>
    <property type="evidence" value="ECO:0007669"/>
    <property type="project" value="InterPro"/>
</dbReference>
<dbReference type="GO" id="GO:0046872">
    <property type="term" value="F:metal ion binding"/>
    <property type="evidence" value="ECO:0007669"/>
    <property type="project" value="UniProtKB-KW"/>
</dbReference>
<dbReference type="GO" id="GO:0098809">
    <property type="term" value="F:nitrite reductase activity"/>
    <property type="evidence" value="ECO:0000250"/>
    <property type="project" value="UniProtKB"/>
</dbReference>
<dbReference type="GO" id="GO:0019825">
    <property type="term" value="F:oxygen binding"/>
    <property type="evidence" value="ECO:0007669"/>
    <property type="project" value="InterPro"/>
</dbReference>
<dbReference type="GO" id="GO:0005344">
    <property type="term" value="F:oxygen carrier activity"/>
    <property type="evidence" value="ECO:0000250"/>
    <property type="project" value="UniProtKB"/>
</dbReference>
<dbReference type="GO" id="GO:0004601">
    <property type="term" value="F:peroxidase activity"/>
    <property type="evidence" value="ECO:0000250"/>
    <property type="project" value="UniProtKB"/>
</dbReference>
<dbReference type="GO" id="GO:0019430">
    <property type="term" value="P:removal of superoxide radicals"/>
    <property type="evidence" value="ECO:0000250"/>
    <property type="project" value="UniProtKB"/>
</dbReference>
<dbReference type="CDD" id="cd08926">
    <property type="entry name" value="Mb"/>
    <property type="match status" value="1"/>
</dbReference>
<dbReference type="Gene3D" id="6.10.140.2100">
    <property type="match status" value="1"/>
</dbReference>
<dbReference type="Gene3D" id="6.10.140.2110">
    <property type="match status" value="1"/>
</dbReference>
<dbReference type="InterPro" id="IPR000971">
    <property type="entry name" value="Globin"/>
</dbReference>
<dbReference type="InterPro" id="IPR009050">
    <property type="entry name" value="Globin-like_sf"/>
</dbReference>
<dbReference type="InterPro" id="IPR002335">
    <property type="entry name" value="Myoglobin"/>
</dbReference>
<dbReference type="PANTHER" id="PTHR47132">
    <property type="entry name" value="MYOGLOBIN"/>
    <property type="match status" value="1"/>
</dbReference>
<dbReference type="PANTHER" id="PTHR47132:SF1">
    <property type="entry name" value="MYOGLOBIN"/>
    <property type="match status" value="1"/>
</dbReference>
<dbReference type="Pfam" id="PF00042">
    <property type="entry name" value="Globin"/>
    <property type="match status" value="1"/>
</dbReference>
<dbReference type="PRINTS" id="PR00613">
    <property type="entry name" value="MYOGLOBIN"/>
</dbReference>
<dbReference type="SUPFAM" id="SSF46458">
    <property type="entry name" value="Globin-like"/>
    <property type="match status" value="1"/>
</dbReference>
<dbReference type="PROSITE" id="PS01033">
    <property type="entry name" value="GLOBIN"/>
    <property type="match status" value="1"/>
</dbReference>
<feature type="initiator methionine" description="Removed" evidence="4">
    <location>
        <position position="1"/>
    </location>
</feature>
<feature type="chain" id="PRO_0000053368" description="Myoglobin">
    <location>
        <begin position="2"/>
        <end position="149"/>
    </location>
</feature>
<feature type="domain" description="Globin" evidence="3">
    <location>
        <begin position="2"/>
        <end position="143"/>
    </location>
</feature>
<feature type="binding site" description="proximal binding residue" evidence="1">
    <location>
        <position position="89"/>
    </location>
    <ligand>
        <name>heme b</name>
        <dbReference type="ChEBI" id="CHEBI:60344"/>
    </ligand>
    <ligandPart>
        <name>Fe</name>
        <dbReference type="ChEBI" id="CHEBI:18248"/>
    </ligandPart>
</feature>
<feature type="modified residue" description="N-acetylvaline" evidence="4">
    <location>
        <position position="2"/>
    </location>
</feature>
<feature type="sequence variant">
    <original>A</original>
    <variation>G</variation>
    <location>
        <position position="126"/>
    </location>
</feature>
<name>MYG_MUSAN</name>
<gene>
    <name type="primary">mb</name>
</gene>
<accession>P14399</accession>
<evidence type="ECO:0000250" key="1">
    <source>
        <dbReference type="UniProtKB" id="P02144"/>
    </source>
</evidence>
<evidence type="ECO:0000250" key="2">
    <source>
        <dbReference type="UniProtKB" id="P02185"/>
    </source>
</evidence>
<evidence type="ECO:0000255" key="3">
    <source>
        <dbReference type="PROSITE-ProRule" id="PRU00238"/>
    </source>
</evidence>
<evidence type="ECO:0000269" key="4">
    <source>
    </source>
</evidence>
<sequence>MVDWEKVNSVWSAVESDLTAIGQNILLRLFEQYPESQNHFPKFKNKSLGELKDTADIKAQADTVLSALGNIVKKKGSHSQPVKALAATHITTHKIPPHYFTKITTIAVDVLSEMYPSEMNAQVQAAFSGAFKIICSDIEKEYKAANFQG</sequence>